<name>NNRE_RUBBR</name>
<keyword id="KW-0413">Isomerase</keyword>
<keyword id="KW-0479">Metal-binding</keyword>
<keyword id="KW-0520">NAD</keyword>
<keyword id="KW-0521">NADP</keyword>
<keyword id="KW-0547">Nucleotide-binding</keyword>
<keyword id="KW-0630">Potassium</keyword>
<keyword id="KW-1185">Reference proteome</keyword>
<sequence length="229" mass="24303">MSRVLSRDQSREVDQIAIEQFHLPGVVLMENAGRNCAELIRQLSPAGQILILAGKGNNGGDGFVIARHLHNAGLNVKLLVFANPEDYSGEAESNWRIITAMQLPAVSNATAADLSQALAELPESSLIVDALLGTGIRGQVRAPFDEIITAVNAYRDDHPHAIVFAVDVPSGLDCDTGLPCGVAIKADQTATFVMLKQGFVTGDGPEYTGTTHVIDIGIPPALLDRLTAE</sequence>
<dbReference type="EC" id="5.1.99.6" evidence="1"/>
<dbReference type="EMBL" id="CP002546">
    <property type="protein sequence ID" value="ADY57691.1"/>
    <property type="molecule type" value="Genomic_DNA"/>
</dbReference>
<dbReference type="RefSeq" id="WP_013626435.1">
    <property type="nucleotide sequence ID" value="NC_015174.1"/>
</dbReference>
<dbReference type="SMR" id="F0SLK8"/>
<dbReference type="STRING" id="756272.Plabr_0061"/>
<dbReference type="KEGG" id="pbs:Plabr_0061"/>
<dbReference type="eggNOG" id="COG0062">
    <property type="taxonomic scope" value="Bacteria"/>
</dbReference>
<dbReference type="HOGENOM" id="CLU_024853_0_1_0"/>
<dbReference type="OrthoDB" id="9806925at2"/>
<dbReference type="Proteomes" id="UP000006860">
    <property type="component" value="Chromosome"/>
</dbReference>
<dbReference type="GO" id="GO:0046872">
    <property type="term" value="F:metal ion binding"/>
    <property type="evidence" value="ECO:0007669"/>
    <property type="project" value="UniProtKB-KW"/>
</dbReference>
<dbReference type="GO" id="GO:0052856">
    <property type="term" value="F:NAD(P)HX epimerase activity"/>
    <property type="evidence" value="ECO:0007669"/>
    <property type="project" value="UniProtKB-UniRule"/>
</dbReference>
<dbReference type="GO" id="GO:0000166">
    <property type="term" value="F:nucleotide binding"/>
    <property type="evidence" value="ECO:0007669"/>
    <property type="project" value="UniProtKB-KW"/>
</dbReference>
<dbReference type="Gene3D" id="3.40.50.10260">
    <property type="entry name" value="YjeF N-terminal domain"/>
    <property type="match status" value="1"/>
</dbReference>
<dbReference type="HAMAP" id="MF_01966">
    <property type="entry name" value="NADHX_epimerase"/>
    <property type="match status" value="1"/>
</dbReference>
<dbReference type="InterPro" id="IPR004443">
    <property type="entry name" value="YjeF_N_dom"/>
</dbReference>
<dbReference type="InterPro" id="IPR036652">
    <property type="entry name" value="YjeF_N_dom_sf"/>
</dbReference>
<dbReference type="InterPro" id="IPR032976">
    <property type="entry name" value="YJEFN_prot_NAXE-like"/>
</dbReference>
<dbReference type="NCBIfam" id="TIGR00197">
    <property type="entry name" value="yjeF_nterm"/>
    <property type="match status" value="1"/>
</dbReference>
<dbReference type="PANTHER" id="PTHR13232">
    <property type="entry name" value="NAD(P)H-HYDRATE EPIMERASE"/>
    <property type="match status" value="1"/>
</dbReference>
<dbReference type="PANTHER" id="PTHR13232:SF10">
    <property type="entry name" value="NAD(P)H-HYDRATE EPIMERASE"/>
    <property type="match status" value="1"/>
</dbReference>
<dbReference type="Pfam" id="PF03853">
    <property type="entry name" value="YjeF_N"/>
    <property type="match status" value="1"/>
</dbReference>
<dbReference type="SUPFAM" id="SSF64153">
    <property type="entry name" value="YjeF N-terminal domain-like"/>
    <property type="match status" value="1"/>
</dbReference>
<dbReference type="PROSITE" id="PS51385">
    <property type="entry name" value="YJEF_N"/>
    <property type="match status" value="1"/>
</dbReference>
<reference key="1">
    <citation type="submission" date="2011-02" db="EMBL/GenBank/DDBJ databases">
        <title>The complete genome of Planctomyces brasiliensis DSM 5305.</title>
        <authorList>
            <person name="Lucas S."/>
            <person name="Copeland A."/>
            <person name="Lapidus A."/>
            <person name="Bruce D."/>
            <person name="Goodwin L."/>
            <person name="Pitluck S."/>
            <person name="Kyrpides N."/>
            <person name="Mavromatis K."/>
            <person name="Pagani I."/>
            <person name="Ivanova N."/>
            <person name="Ovchinnikova G."/>
            <person name="Lu M."/>
            <person name="Detter J.C."/>
            <person name="Han C."/>
            <person name="Land M."/>
            <person name="Hauser L."/>
            <person name="Markowitz V."/>
            <person name="Cheng J.-F."/>
            <person name="Hugenholtz P."/>
            <person name="Woyke T."/>
            <person name="Wu D."/>
            <person name="Tindall B."/>
            <person name="Pomrenke H.G."/>
            <person name="Brambilla E."/>
            <person name="Klenk H.-P."/>
            <person name="Eisen J.A."/>
        </authorList>
    </citation>
    <scope>NUCLEOTIDE SEQUENCE [LARGE SCALE GENOMIC DNA]</scope>
    <source>
        <strain>ATCC 49424 / DSM 5305 / JCM 21570 / IAM 15109 / NBRC 103401 / IFAM 1448</strain>
    </source>
</reference>
<organism>
    <name type="scientific">Rubinisphaera brasiliensis (strain ATCC 49424 / DSM 5305 / JCM 21570 / IAM 15109 / NBRC 103401 / IFAM 1448)</name>
    <name type="common">Planctomyces brasiliensis</name>
    <dbReference type="NCBI Taxonomy" id="756272"/>
    <lineage>
        <taxon>Bacteria</taxon>
        <taxon>Pseudomonadati</taxon>
        <taxon>Planctomycetota</taxon>
        <taxon>Planctomycetia</taxon>
        <taxon>Planctomycetales</taxon>
        <taxon>Planctomycetaceae</taxon>
        <taxon>Rubinisphaera</taxon>
    </lineage>
</organism>
<gene>
    <name evidence="1" type="primary">nnrE</name>
    <name type="ordered locus">Plabr_0061</name>
</gene>
<accession>F0SLK8</accession>
<evidence type="ECO:0000255" key="1">
    <source>
        <dbReference type="HAMAP-Rule" id="MF_01966"/>
    </source>
</evidence>
<protein>
    <recommendedName>
        <fullName evidence="1">NAD(P)H-hydrate epimerase</fullName>
        <ecNumber evidence="1">5.1.99.6</ecNumber>
    </recommendedName>
    <alternativeName>
        <fullName evidence="1">NAD(P)HX epimerase</fullName>
    </alternativeName>
</protein>
<comment type="function">
    <text evidence="1">Catalyzes the epimerization of the S- and R-forms of NAD(P)HX, a damaged form of NAD(P)H that is a result of enzymatic or heat-dependent hydration. This is a prerequisite for the S-specific NAD(P)H-hydrate dehydratase to allow the repair of both epimers of NAD(P)HX.</text>
</comment>
<comment type="catalytic activity">
    <reaction evidence="1">
        <text>(6R)-NADHX = (6S)-NADHX</text>
        <dbReference type="Rhea" id="RHEA:32215"/>
        <dbReference type="ChEBI" id="CHEBI:64074"/>
        <dbReference type="ChEBI" id="CHEBI:64075"/>
        <dbReference type="EC" id="5.1.99.6"/>
    </reaction>
</comment>
<comment type="catalytic activity">
    <reaction evidence="1">
        <text>(6R)-NADPHX = (6S)-NADPHX</text>
        <dbReference type="Rhea" id="RHEA:32227"/>
        <dbReference type="ChEBI" id="CHEBI:64076"/>
        <dbReference type="ChEBI" id="CHEBI:64077"/>
        <dbReference type="EC" id="5.1.99.6"/>
    </reaction>
</comment>
<comment type="cofactor">
    <cofactor evidence="1">
        <name>K(+)</name>
        <dbReference type="ChEBI" id="CHEBI:29103"/>
    </cofactor>
    <text evidence="1">Binds 1 potassium ion per subunit.</text>
</comment>
<comment type="similarity">
    <text evidence="1">Belongs to the NnrE/AIBP family.</text>
</comment>
<feature type="chain" id="PRO_0000416373" description="NAD(P)H-hydrate epimerase">
    <location>
        <begin position="1"/>
        <end position="229"/>
    </location>
</feature>
<feature type="domain" description="YjeF N-terminal" evidence="1">
    <location>
        <begin position="10"/>
        <end position="224"/>
    </location>
</feature>
<feature type="binding site" evidence="1">
    <location>
        <begin position="57"/>
        <end position="61"/>
    </location>
    <ligand>
        <name>(6S)-NADPHX</name>
        <dbReference type="ChEBI" id="CHEBI:64076"/>
    </ligand>
</feature>
<feature type="binding site" evidence="1">
    <location>
        <position position="58"/>
    </location>
    <ligand>
        <name>K(+)</name>
        <dbReference type="ChEBI" id="CHEBI:29103"/>
    </ligand>
</feature>
<feature type="binding site" evidence="1">
    <location>
        <position position="129"/>
    </location>
    <ligand>
        <name>K(+)</name>
        <dbReference type="ChEBI" id="CHEBI:29103"/>
    </ligand>
</feature>
<feature type="binding site" evidence="1">
    <location>
        <begin position="133"/>
        <end position="139"/>
    </location>
    <ligand>
        <name>(6S)-NADPHX</name>
        <dbReference type="ChEBI" id="CHEBI:64076"/>
    </ligand>
</feature>
<feature type="binding site" evidence="1">
    <location>
        <position position="167"/>
    </location>
    <ligand>
        <name>(6S)-NADPHX</name>
        <dbReference type="ChEBI" id="CHEBI:64076"/>
    </ligand>
</feature>
<feature type="binding site" evidence="1">
    <location>
        <position position="170"/>
    </location>
    <ligand>
        <name>K(+)</name>
        <dbReference type="ChEBI" id="CHEBI:29103"/>
    </ligand>
</feature>
<proteinExistence type="inferred from homology"/>